<evidence type="ECO:0000250" key="1">
    <source>
        <dbReference type="UniProtKB" id="G4V4G2"/>
    </source>
</evidence>
<evidence type="ECO:0000269" key="2">
    <source>
    </source>
</evidence>
<evidence type="ECO:0000269" key="3">
    <source>
    </source>
</evidence>
<evidence type="ECO:0000269" key="4">
    <source>
    </source>
</evidence>
<evidence type="ECO:0000269" key="5">
    <source>
    </source>
</evidence>
<evidence type="ECO:0000269" key="6">
    <source>
    </source>
</evidence>
<evidence type="ECO:0000269" key="7">
    <source>
    </source>
</evidence>
<evidence type="ECO:0000303" key="8">
    <source>
    </source>
</evidence>
<evidence type="ECO:0000303" key="9">
    <source>
    </source>
</evidence>
<evidence type="ECO:0000305" key="10"/>
<evidence type="ECO:0000305" key="11">
    <source>
    </source>
</evidence>
<evidence type="ECO:0007829" key="12">
    <source>
        <dbReference type="PDB" id="1X6I"/>
    </source>
</evidence>
<gene>
    <name evidence="9" type="primary">sdhE</name>
    <name evidence="8" type="synonym">cptB</name>
    <name type="synonym">ygfY</name>
    <name type="ordered locus">b2897</name>
    <name type="ordered locus">JW2865</name>
</gene>
<comment type="function">
    <text evidence="5 6 7 11">An FAD assembly protein, which accelerates covalent attachment of the cofactor into other proteins (PubMed:22474332, PubMed:24374335, PubMed:26644464). Plays an essential role in the assembly of succinate dehydrogenase (SDH, respiratory complex II), an enzyme complex that is a component of both the tricarboxylic acid cycle and the electron transport chain, and which couples the oxidation of succinate to fumarate with the reduction of ubiquinone (coenzyme Q) to ubiquinol. Required for flavinylation (covalent attachment of FAD) of the flavoprotein subunit SdhA of SDH (PubMed:22474332, PubMed:24374335, PubMed:26644464). Required for flavinylation of the flavoprotein subunit FrdA of fumarate reductase (FRD) (PubMed:26644464). Binds 2 different sites on the flavoprotein target FrdA (and presumably also SdhA), possibly positioning FAD and protein to facilitate the covalent bond formation; covalent attachment of FAD is not required for SDH or FRD complex enzyme formation (PubMed:26644464). Overexpression of this protein and YgfX (formerly cptA) restores production of prodigiosin antibiotic (Pig) in Serratia strains with deletions of sdhE-ygfX (PubMed:22474332).</text>
</comment>
<comment type="subunit">
    <text evidence="2 7">Monomer (PubMed:15593094). Can be cross-linked to FrdA and SdhA (PubMed:26644464).</text>
</comment>
<comment type="subcellular location">
    <subcellularLocation>
        <location evidence="1">Cytoplasm</location>
    </subcellularLocation>
</comment>
<comment type="disruption phenotype">
    <text evidence="4 6 7">No aerobic growth on succinate, 80% reduction of succinate dehydrogenase (SDH) activity (PubMed:22474332). Significantly decreased anaerobic growth on glycerol fumarate medium, 70% reduction in fumarate reductase activity (PubMed:24374335). Low covalent attachment of FAD to FrdA or SdhA (PubMed:26644464).</text>
</comment>
<comment type="similarity">
    <text evidence="10">Belongs to the SdhE FAD assembly factor family.</text>
</comment>
<comment type="caution">
    <text evidence="3 5">Was originally thought to be the antitoxin component of a type II toxin-antitoxin (TA) system (PubMed:22239607). When coexpressed with cognate toxin CptA (now ygfX), the antitoxin neutralizes toxicity of CptA (PubMed:22239607). Has been suggested to be a transcriptional regulator (PubMed:22239607). The putative toxin, CptA (ygfX) has since been shown not to be toxic in E.coli or Serratia species (PubMed:23657679).</text>
</comment>
<protein>
    <recommendedName>
        <fullName evidence="9">FAD assembly factor SdhE</fullName>
    </recommendedName>
    <alternativeName>
        <fullName evidence="8">Antitoxin CptB</fullName>
    </alternativeName>
</protein>
<organism>
    <name type="scientific">Escherichia coli (strain K12)</name>
    <dbReference type="NCBI Taxonomy" id="83333"/>
    <lineage>
        <taxon>Bacteria</taxon>
        <taxon>Pseudomonadati</taxon>
        <taxon>Pseudomonadota</taxon>
        <taxon>Gammaproteobacteria</taxon>
        <taxon>Enterobacterales</taxon>
        <taxon>Enterobacteriaceae</taxon>
        <taxon>Escherichia</taxon>
    </lineage>
</organism>
<sequence length="88" mass="10547">MDINNKARIHWACRRGMRELDISIMPFFEHEYDSLSDDEKRIFIRLLECDDPDLFNWLMNHGKPADAELEMMVRLIQTRNRERGPVAI</sequence>
<proteinExistence type="evidence at protein level"/>
<accession>P64559</accession>
<accession>Q2M9U4</accession>
<accession>Q46825</accession>
<keyword id="KW-0002">3D-structure</keyword>
<keyword id="KW-0143">Chaperone</keyword>
<keyword id="KW-0963">Cytoplasm</keyword>
<keyword id="KW-1185">Reference proteome</keyword>
<reference key="1">
    <citation type="journal article" date="1997" name="Science">
        <title>The complete genome sequence of Escherichia coli K-12.</title>
        <authorList>
            <person name="Blattner F.R."/>
            <person name="Plunkett G. III"/>
            <person name="Bloch C.A."/>
            <person name="Perna N.T."/>
            <person name="Burland V."/>
            <person name="Riley M."/>
            <person name="Collado-Vides J."/>
            <person name="Glasner J.D."/>
            <person name="Rode C.K."/>
            <person name="Mayhew G.F."/>
            <person name="Gregor J."/>
            <person name="Davis N.W."/>
            <person name="Kirkpatrick H.A."/>
            <person name="Goeden M.A."/>
            <person name="Rose D.J."/>
            <person name="Mau B."/>
            <person name="Shao Y."/>
        </authorList>
    </citation>
    <scope>NUCLEOTIDE SEQUENCE [LARGE SCALE GENOMIC DNA]</scope>
    <source>
        <strain>K12 / MG1655 / ATCC 47076</strain>
    </source>
</reference>
<reference key="2">
    <citation type="journal article" date="2006" name="Mol. Syst. Biol.">
        <title>Highly accurate genome sequences of Escherichia coli K-12 strains MG1655 and W3110.</title>
        <authorList>
            <person name="Hayashi K."/>
            <person name="Morooka N."/>
            <person name="Yamamoto Y."/>
            <person name="Fujita K."/>
            <person name="Isono K."/>
            <person name="Choi S."/>
            <person name="Ohtsubo E."/>
            <person name="Baba T."/>
            <person name="Wanner B.L."/>
            <person name="Mori H."/>
            <person name="Horiuchi T."/>
        </authorList>
    </citation>
    <scope>NUCLEOTIDE SEQUENCE [LARGE SCALE GENOMIC DNA]</scope>
    <source>
        <strain>K12 / W3110 / ATCC 27325 / DSM 5911</strain>
    </source>
</reference>
<reference key="3">
    <citation type="journal article" date="2012" name="FEMS Microbiol. Lett.">
        <title>A novel membrane-bound toxin for cell division, CptA (YgfX), inhibits polymerization of cytoskeleton proteins, FtsZ and MreB, in Escherichia coli.</title>
        <authorList>
            <person name="Masuda H."/>
            <person name="Tan Q."/>
            <person name="Awano N."/>
            <person name="Yamaguchi Y."/>
            <person name="Inouye M."/>
        </authorList>
    </citation>
    <scope>PRELIMINARY (INCORRECT) FUNCTION AS AN ANTITOXIN</scope>
    <source>
        <strain>B / BL21-DE3</strain>
        <strain>K12 / BW25113</strain>
    </source>
</reference>
<reference key="4">
    <citation type="journal article" date="2012" name="J. Biol. Chem.">
        <title>SdhE is a conserved protein required for flavinylation of succinate dehydrogenase in bacteria.</title>
        <authorList>
            <person name="McNeil M.B."/>
            <person name="Clulow J.S."/>
            <person name="Wilf N.M."/>
            <person name="Salmond G.P."/>
            <person name="Fineran P.C."/>
        </authorList>
    </citation>
    <scope>FUNCTION</scope>
    <scope>DISRUPTION PHENOTYPE</scope>
    <source>
        <strain>K12 / BW25113</strain>
    </source>
</reference>
<reference key="5">
    <citation type="journal article" date="2013" name="Microbiology">
        <title>YgfX (CptA) is a multimeric membrane protein that interacts with the succinate dehydrogenase assembly factor SdhE (YgfY).</title>
        <authorList>
            <person name="McNeil M.B."/>
            <person name="Iglesias-Cans M.C."/>
            <person name="Clulow J.S."/>
            <person name="Fineran P.C."/>
        </authorList>
    </citation>
    <scope>NOT A TOXIN-ANTITOXIN SYSTEM</scope>
    <source>
        <strain>K12 / BW25113</strain>
    </source>
</reference>
<reference key="6">
    <citation type="journal article" date="2014" name="FEBS Lett.">
        <title>The succinate dehydrogenase assembly factor, SdhE, is required for the flavinylation and activation of fumarate reductase in bacteria.</title>
        <authorList>
            <person name="McNeil M.B."/>
            <person name="Hampton H.G."/>
            <person name="Hards K.J."/>
            <person name="Watson B.N."/>
            <person name="Cook G.M."/>
            <person name="Fineran P.C."/>
        </authorList>
    </citation>
    <scope>FUNCTION</scope>
    <scope>DISRUPTION PHENOTYPE</scope>
    <source>
        <strain>K12 / BW25113</strain>
    </source>
</reference>
<reference key="7">
    <citation type="journal article" date="2016" name="J. Biol. Chem.">
        <title>Binding of the covalent flavin assembly factor to the flavoprotein subunit of complex II.</title>
        <authorList>
            <person name="Maklashina E."/>
            <person name="Rajagukguk S."/>
            <person name="Starbird C.A."/>
            <person name="McDonald W.H."/>
            <person name="Koganitsky A."/>
            <person name="Eisenbach M."/>
            <person name="Iverson T.M."/>
            <person name="Cecchini G."/>
        </authorList>
    </citation>
    <scope>FUNCTION</scope>
    <scope>SUBUNIT</scope>
    <scope>DISRUPTION PHENOTYPE</scope>
    <scope>MUTAGENESIS OF ARG-14 AND GLU-19</scope>
    <source>
        <strain>K12 / RP437</strain>
    </source>
</reference>
<reference key="8">
    <citation type="journal article" date="2005" name="Proteins">
        <title>Crystal structure of the YgfY from Escherichia coli, a protein that may be involved in transcriptional regulation.</title>
        <authorList>
            <person name="Lim K."/>
            <person name="Doseeva V."/>
            <person name="Demirkan E.S."/>
            <person name="Pullalarevu S."/>
            <person name="Krajewski W."/>
            <person name="Galkin A."/>
            <person name="Howard A."/>
            <person name="Herzberg O."/>
        </authorList>
    </citation>
    <scope>X-RAY CRYSTALLOGRAPHY (1.2 ANGSTROMS)</scope>
    <scope>SUBUNIT</scope>
</reference>
<dbReference type="EMBL" id="U28375">
    <property type="protein sequence ID" value="AAA83078.1"/>
    <property type="molecule type" value="Genomic_DNA"/>
</dbReference>
<dbReference type="EMBL" id="U00096">
    <property type="protein sequence ID" value="AAC75935.1"/>
    <property type="molecule type" value="Genomic_DNA"/>
</dbReference>
<dbReference type="EMBL" id="AP009048">
    <property type="protein sequence ID" value="BAE76962.1"/>
    <property type="molecule type" value="Genomic_DNA"/>
</dbReference>
<dbReference type="PIR" id="A65074">
    <property type="entry name" value="A65074"/>
</dbReference>
<dbReference type="RefSeq" id="NP_417373.1">
    <property type="nucleotide sequence ID" value="NC_000913.3"/>
</dbReference>
<dbReference type="RefSeq" id="WP_000354046.1">
    <property type="nucleotide sequence ID" value="NZ_STEB01000001.1"/>
</dbReference>
<dbReference type="PDB" id="1X6I">
    <property type="method" value="X-ray"/>
    <property type="resolution" value="1.20 A"/>
    <property type="chains" value="A/B=1-88"/>
</dbReference>
<dbReference type="PDB" id="1X6J">
    <property type="method" value="X-ray"/>
    <property type="resolution" value="2.00 A"/>
    <property type="chains" value="A=1-88"/>
</dbReference>
<dbReference type="PDB" id="6B58">
    <property type="method" value="X-ray"/>
    <property type="resolution" value="2.61 A"/>
    <property type="chains" value="B/D=6-84"/>
</dbReference>
<dbReference type="PDB" id="6C12">
    <property type="method" value="X-ray"/>
    <property type="resolution" value="2.15 A"/>
    <property type="chains" value="C/D=2-88"/>
</dbReference>
<dbReference type="PDBsum" id="1X6I"/>
<dbReference type="PDBsum" id="1X6J"/>
<dbReference type="PDBsum" id="6B58"/>
<dbReference type="PDBsum" id="6C12"/>
<dbReference type="SMR" id="P64559"/>
<dbReference type="BioGRID" id="4262342">
    <property type="interactions" value="23"/>
</dbReference>
<dbReference type="BioGRID" id="851704">
    <property type="interactions" value="2"/>
</dbReference>
<dbReference type="FunCoup" id="P64559">
    <property type="interactions" value="176"/>
</dbReference>
<dbReference type="IntAct" id="P64559">
    <property type="interactions" value="6"/>
</dbReference>
<dbReference type="STRING" id="511145.b2897"/>
<dbReference type="jPOST" id="P64559"/>
<dbReference type="PaxDb" id="511145-b2897"/>
<dbReference type="EnsemblBacteria" id="AAC75935">
    <property type="protein sequence ID" value="AAC75935"/>
    <property type="gene ID" value="b2897"/>
</dbReference>
<dbReference type="GeneID" id="93779105"/>
<dbReference type="GeneID" id="947382"/>
<dbReference type="KEGG" id="ecj:JW2865"/>
<dbReference type="KEGG" id="eco:b2897"/>
<dbReference type="KEGG" id="ecoc:C3026_15885"/>
<dbReference type="PATRIC" id="fig|511145.12.peg.2991"/>
<dbReference type="EchoBASE" id="EB2885"/>
<dbReference type="eggNOG" id="COG2938">
    <property type="taxonomic scope" value="Bacteria"/>
</dbReference>
<dbReference type="HOGENOM" id="CLU_103054_2_2_6"/>
<dbReference type="InParanoid" id="P64559"/>
<dbReference type="OMA" id="FEHEYDT"/>
<dbReference type="OrthoDB" id="9180899at2"/>
<dbReference type="PhylomeDB" id="P64559"/>
<dbReference type="BioCyc" id="EcoCyc:G7510-MONOMER"/>
<dbReference type="EvolutionaryTrace" id="P64559"/>
<dbReference type="PRO" id="PR:P64559"/>
<dbReference type="Proteomes" id="UP000000625">
    <property type="component" value="Chromosome"/>
</dbReference>
<dbReference type="GO" id="GO:0005737">
    <property type="term" value="C:cytoplasm"/>
    <property type="evidence" value="ECO:0007669"/>
    <property type="project" value="UniProtKB-SubCell"/>
</dbReference>
<dbReference type="GO" id="GO:0034552">
    <property type="term" value="P:respiratory chain complex II assembly"/>
    <property type="evidence" value="ECO:0000314"/>
    <property type="project" value="UniProtKB"/>
</dbReference>
<dbReference type="GO" id="GO:0006105">
    <property type="term" value="P:succinate metabolic process"/>
    <property type="evidence" value="ECO:0000315"/>
    <property type="project" value="EcoCyc"/>
</dbReference>
<dbReference type="FunFam" id="1.10.150.250:FF:000001">
    <property type="entry name" value="FAD assembly factor SdhE"/>
    <property type="match status" value="1"/>
</dbReference>
<dbReference type="Gene3D" id="1.10.150.250">
    <property type="entry name" value="Flavinator of succinate dehydrogenase"/>
    <property type="match status" value="1"/>
</dbReference>
<dbReference type="InterPro" id="IPR005631">
    <property type="entry name" value="SDH"/>
</dbReference>
<dbReference type="InterPro" id="IPR036714">
    <property type="entry name" value="SDH_sf"/>
</dbReference>
<dbReference type="InterPro" id="IPR050531">
    <property type="entry name" value="SdhE_FAD_assembly_factor"/>
</dbReference>
<dbReference type="NCBIfam" id="NF008130">
    <property type="entry name" value="PRK10878.1"/>
    <property type="match status" value="1"/>
</dbReference>
<dbReference type="PANTHER" id="PTHR39585">
    <property type="entry name" value="FAD ASSEMBLY FACTOR SDHE"/>
    <property type="match status" value="1"/>
</dbReference>
<dbReference type="PANTHER" id="PTHR39585:SF1">
    <property type="entry name" value="FAD ASSEMBLY FACTOR SDHE"/>
    <property type="match status" value="1"/>
</dbReference>
<dbReference type="Pfam" id="PF03937">
    <property type="entry name" value="Sdh5"/>
    <property type="match status" value="1"/>
</dbReference>
<dbReference type="SUPFAM" id="SSF109910">
    <property type="entry name" value="YgfY-like"/>
    <property type="match status" value="1"/>
</dbReference>
<name>SDHE_ECOLI</name>
<feature type="chain" id="PRO_0000214394" description="FAD assembly factor SdhE">
    <location>
        <begin position="1"/>
        <end position="88"/>
    </location>
</feature>
<feature type="mutagenesis site" description="Flavinylates both FrdA and SdhA." evidence="7">
    <original>R</original>
    <variation>A</variation>
    <location>
        <position position="14"/>
    </location>
</feature>
<feature type="mutagenesis site" description="Flavinylates FrdA but not SdhA." evidence="7">
    <original>E</original>
    <variation>A</variation>
    <location>
        <position position="19"/>
    </location>
</feature>
<feature type="helix" evidence="12">
    <location>
        <begin position="6"/>
        <end position="12"/>
    </location>
</feature>
<feature type="helix" evidence="12">
    <location>
        <begin position="18"/>
        <end position="31"/>
    </location>
</feature>
<feature type="helix" evidence="12">
    <location>
        <begin position="32"/>
        <end position="34"/>
    </location>
</feature>
<feature type="helix" evidence="12">
    <location>
        <begin position="37"/>
        <end position="47"/>
    </location>
</feature>
<feature type="helix" evidence="12">
    <location>
        <begin position="51"/>
        <end position="58"/>
    </location>
</feature>
<feature type="strand" evidence="12">
    <location>
        <begin position="61"/>
        <end position="66"/>
    </location>
</feature>
<feature type="helix" evidence="12">
    <location>
        <begin position="67"/>
        <end position="83"/>
    </location>
</feature>